<dbReference type="EC" id="4.2.3.5" evidence="1"/>
<dbReference type="EMBL" id="AE006470">
    <property type="protein sequence ID" value="AAM72660.1"/>
    <property type="molecule type" value="Genomic_DNA"/>
</dbReference>
<dbReference type="RefSeq" id="NP_662318.1">
    <property type="nucleotide sequence ID" value="NC_002932.3"/>
</dbReference>
<dbReference type="RefSeq" id="WP_010933099.1">
    <property type="nucleotide sequence ID" value="NC_002932.3"/>
</dbReference>
<dbReference type="SMR" id="Q8KCI9"/>
<dbReference type="STRING" id="194439.CT1432"/>
<dbReference type="EnsemblBacteria" id="AAM72660">
    <property type="protein sequence ID" value="AAM72660"/>
    <property type="gene ID" value="CT1432"/>
</dbReference>
<dbReference type="KEGG" id="cte:CT1432"/>
<dbReference type="PATRIC" id="fig|194439.7.peg.1300"/>
<dbReference type="eggNOG" id="COG0082">
    <property type="taxonomic scope" value="Bacteria"/>
</dbReference>
<dbReference type="HOGENOM" id="CLU_034547_2_0_10"/>
<dbReference type="OrthoDB" id="9771806at2"/>
<dbReference type="UniPathway" id="UPA00053">
    <property type="reaction ID" value="UER00090"/>
</dbReference>
<dbReference type="Proteomes" id="UP000001007">
    <property type="component" value="Chromosome"/>
</dbReference>
<dbReference type="GO" id="GO:0005829">
    <property type="term" value="C:cytosol"/>
    <property type="evidence" value="ECO:0007669"/>
    <property type="project" value="TreeGrafter"/>
</dbReference>
<dbReference type="GO" id="GO:0004107">
    <property type="term" value="F:chorismate synthase activity"/>
    <property type="evidence" value="ECO:0007669"/>
    <property type="project" value="UniProtKB-UniRule"/>
</dbReference>
<dbReference type="GO" id="GO:0010181">
    <property type="term" value="F:FMN binding"/>
    <property type="evidence" value="ECO:0007669"/>
    <property type="project" value="TreeGrafter"/>
</dbReference>
<dbReference type="GO" id="GO:0008652">
    <property type="term" value="P:amino acid biosynthetic process"/>
    <property type="evidence" value="ECO:0007669"/>
    <property type="project" value="UniProtKB-KW"/>
</dbReference>
<dbReference type="GO" id="GO:0009073">
    <property type="term" value="P:aromatic amino acid family biosynthetic process"/>
    <property type="evidence" value="ECO:0007669"/>
    <property type="project" value="UniProtKB-KW"/>
</dbReference>
<dbReference type="GO" id="GO:0009423">
    <property type="term" value="P:chorismate biosynthetic process"/>
    <property type="evidence" value="ECO:0007669"/>
    <property type="project" value="UniProtKB-UniRule"/>
</dbReference>
<dbReference type="CDD" id="cd07304">
    <property type="entry name" value="Chorismate_synthase"/>
    <property type="match status" value="1"/>
</dbReference>
<dbReference type="FunFam" id="3.60.150.10:FF:000002">
    <property type="entry name" value="Chorismate synthase"/>
    <property type="match status" value="1"/>
</dbReference>
<dbReference type="Gene3D" id="3.60.150.10">
    <property type="entry name" value="Chorismate synthase AroC"/>
    <property type="match status" value="1"/>
</dbReference>
<dbReference type="HAMAP" id="MF_00300">
    <property type="entry name" value="Chorismate_synth"/>
    <property type="match status" value="1"/>
</dbReference>
<dbReference type="InterPro" id="IPR000453">
    <property type="entry name" value="Chorismate_synth"/>
</dbReference>
<dbReference type="InterPro" id="IPR035904">
    <property type="entry name" value="Chorismate_synth_AroC_sf"/>
</dbReference>
<dbReference type="InterPro" id="IPR020541">
    <property type="entry name" value="Chorismate_synthase_CS"/>
</dbReference>
<dbReference type="NCBIfam" id="TIGR00033">
    <property type="entry name" value="aroC"/>
    <property type="match status" value="1"/>
</dbReference>
<dbReference type="NCBIfam" id="NF003793">
    <property type="entry name" value="PRK05382.1"/>
    <property type="match status" value="1"/>
</dbReference>
<dbReference type="PANTHER" id="PTHR21085">
    <property type="entry name" value="CHORISMATE SYNTHASE"/>
    <property type="match status" value="1"/>
</dbReference>
<dbReference type="PANTHER" id="PTHR21085:SF0">
    <property type="entry name" value="CHORISMATE SYNTHASE"/>
    <property type="match status" value="1"/>
</dbReference>
<dbReference type="Pfam" id="PF01264">
    <property type="entry name" value="Chorismate_synt"/>
    <property type="match status" value="1"/>
</dbReference>
<dbReference type="PIRSF" id="PIRSF001456">
    <property type="entry name" value="Chorismate_synth"/>
    <property type="match status" value="1"/>
</dbReference>
<dbReference type="SUPFAM" id="SSF103263">
    <property type="entry name" value="Chorismate synthase, AroC"/>
    <property type="match status" value="1"/>
</dbReference>
<dbReference type="PROSITE" id="PS00787">
    <property type="entry name" value="CHORISMATE_SYNTHASE_1"/>
    <property type="match status" value="1"/>
</dbReference>
<protein>
    <recommendedName>
        <fullName evidence="1">Chorismate synthase</fullName>
        <shortName evidence="1">CS</shortName>
        <ecNumber evidence="1">4.2.3.5</ecNumber>
    </recommendedName>
    <alternativeName>
        <fullName evidence="1">5-enolpyruvylshikimate-3-phosphate phospholyase</fullName>
    </alternativeName>
</protein>
<reference key="1">
    <citation type="journal article" date="2002" name="Proc. Natl. Acad. Sci. U.S.A.">
        <title>The complete genome sequence of Chlorobium tepidum TLS, a photosynthetic, anaerobic, green-sulfur bacterium.</title>
        <authorList>
            <person name="Eisen J.A."/>
            <person name="Nelson K.E."/>
            <person name="Paulsen I.T."/>
            <person name="Heidelberg J.F."/>
            <person name="Wu M."/>
            <person name="Dodson R.J."/>
            <person name="DeBoy R.T."/>
            <person name="Gwinn M.L."/>
            <person name="Nelson W.C."/>
            <person name="Haft D.H."/>
            <person name="Hickey E.K."/>
            <person name="Peterson J.D."/>
            <person name="Durkin A.S."/>
            <person name="Kolonay J.F."/>
            <person name="Yang F."/>
            <person name="Holt I.E."/>
            <person name="Umayam L.A."/>
            <person name="Mason T.M."/>
            <person name="Brenner M."/>
            <person name="Shea T.P."/>
            <person name="Parksey D.S."/>
            <person name="Nierman W.C."/>
            <person name="Feldblyum T.V."/>
            <person name="Hansen C.L."/>
            <person name="Craven M.B."/>
            <person name="Radune D."/>
            <person name="Vamathevan J.J."/>
            <person name="Khouri H.M."/>
            <person name="White O."/>
            <person name="Gruber T.M."/>
            <person name="Ketchum K.A."/>
            <person name="Venter J.C."/>
            <person name="Tettelin H."/>
            <person name="Bryant D.A."/>
            <person name="Fraser C.M."/>
        </authorList>
    </citation>
    <scope>NUCLEOTIDE SEQUENCE [LARGE SCALE GENOMIC DNA]</scope>
    <source>
        <strain>ATCC 49652 / DSM 12025 / NBRC 103806 / TLS</strain>
    </source>
</reference>
<organism>
    <name type="scientific">Chlorobaculum tepidum (strain ATCC 49652 / DSM 12025 / NBRC 103806 / TLS)</name>
    <name type="common">Chlorobium tepidum</name>
    <dbReference type="NCBI Taxonomy" id="194439"/>
    <lineage>
        <taxon>Bacteria</taxon>
        <taxon>Pseudomonadati</taxon>
        <taxon>Chlorobiota</taxon>
        <taxon>Chlorobiia</taxon>
        <taxon>Chlorobiales</taxon>
        <taxon>Chlorobiaceae</taxon>
        <taxon>Chlorobaculum</taxon>
    </lineage>
</organism>
<sequence>MIRYFTAGESHGPALSAIVEGMPAGVALTESDINDQLARRQQGYGRGGRMKIETDRAEVLSGVRFGKTIGSPVAMLIRNRDWENWTTSMAQFEDHATEVQKITIPRPGHADLTGFVKYGFDDIRPVIDRSSARETAARVAAGSLARAFLRQLGIQIGSYISTIGPVSEAAAPASLQELLDAGAESLAAEADKSPVRMLDPEAETAAIAAIDQAKADGDTLGGIVELYITGVPMGLGSYVQHDRRLDSELAAAIMSIQAIKGVEIGPAFDNARKPGSQVHDELFAGGEKGLRRETNRAGGIEGSMSSGQPIHIRAAMKPISSLVSPLSSFDLATLEAVQSRFERSDTCAVPAAGVVAEAVVAPVIANALLEKLGGDHMAEIKERLEVYRAALRMRFEK</sequence>
<gene>
    <name evidence="1" type="primary">aroC</name>
    <name type="ordered locus">CT1432</name>
</gene>
<accession>Q8KCI9</accession>
<evidence type="ECO:0000255" key="1">
    <source>
        <dbReference type="HAMAP-Rule" id="MF_00300"/>
    </source>
</evidence>
<keyword id="KW-0028">Amino-acid biosynthesis</keyword>
<keyword id="KW-0057">Aromatic amino acid biosynthesis</keyword>
<keyword id="KW-0274">FAD</keyword>
<keyword id="KW-0285">Flavoprotein</keyword>
<keyword id="KW-0288">FMN</keyword>
<keyword id="KW-0456">Lyase</keyword>
<keyword id="KW-0521">NADP</keyword>
<keyword id="KW-1185">Reference proteome</keyword>
<name>AROC_CHLTE</name>
<comment type="function">
    <text evidence="1">Catalyzes the anti-1,4-elimination of the C-3 phosphate and the C-6 proR hydrogen from 5-enolpyruvylshikimate-3-phosphate (EPSP) to yield chorismate, which is the branch point compound that serves as the starting substrate for the three terminal pathways of aromatic amino acid biosynthesis. This reaction introduces a second double bond into the aromatic ring system.</text>
</comment>
<comment type="catalytic activity">
    <reaction evidence="1">
        <text>5-O-(1-carboxyvinyl)-3-phosphoshikimate = chorismate + phosphate</text>
        <dbReference type="Rhea" id="RHEA:21020"/>
        <dbReference type="ChEBI" id="CHEBI:29748"/>
        <dbReference type="ChEBI" id="CHEBI:43474"/>
        <dbReference type="ChEBI" id="CHEBI:57701"/>
        <dbReference type="EC" id="4.2.3.5"/>
    </reaction>
</comment>
<comment type="cofactor">
    <cofactor evidence="1">
        <name>FMNH2</name>
        <dbReference type="ChEBI" id="CHEBI:57618"/>
    </cofactor>
    <text evidence="1">Reduced FMN (FMNH(2)).</text>
</comment>
<comment type="pathway">
    <text evidence="1">Metabolic intermediate biosynthesis; chorismate biosynthesis; chorismate from D-erythrose 4-phosphate and phosphoenolpyruvate: step 7/7.</text>
</comment>
<comment type="subunit">
    <text evidence="1">Homotetramer.</text>
</comment>
<comment type="similarity">
    <text evidence="1">Belongs to the chorismate synthase family.</text>
</comment>
<proteinExistence type="inferred from homology"/>
<feature type="chain" id="PRO_0000140574" description="Chorismate synthase">
    <location>
        <begin position="1"/>
        <end position="397"/>
    </location>
</feature>
<feature type="binding site" evidence="1">
    <location>
        <position position="40"/>
    </location>
    <ligand>
        <name>NADP(+)</name>
        <dbReference type="ChEBI" id="CHEBI:58349"/>
    </ligand>
</feature>
<feature type="binding site" evidence="1">
    <location>
        <position position="46"/>
    </location>
    <ligand>
        <name>NADP(+)</name>
        <dbReference type="ChEBI" id="CHEBI:58349"/>
    </ligand>
</feature>
<feature type="binding site" evidence="1">
    <location>
        <begin position="129"/>
        <end position="131"/>
    </location>
    <ligand>
        <name>FMN</name>
        <dbReference type="ChEBI" id="CHEBI:58210"/>
    </ligand>
</feature>
<feature type="binding site" evidence="1">
    <location>
        <begin position="257"/>
        <end position="258"/>
    </location>
    <ligand>
        <name>FMN</name>
        <dbReference type="ChEBI" id="CHEBI:58210"/>
    </ligand>
</feature>
<feature type="binding site" evidence="1">
    <location>
        <position position="302"/>
    </location>
    <ligand>
        <name>FMN</name>
        <dbReference type="ChEBI" id="CHEBI:58210"/>
    </ligand>
</feature>
<feature type="binding site" evidence="1">
    <location>
        <begin position="317"/>
        <end position="321"/>
    </location>
    <ligand>
        <name>FMN</name>
        <dbReference type="ChEBI" id="CHEBI:58210"/>
    </ligand>
</feature>
<feature type="binding site" evidence="1">
    <location>
        <position position="343"/>
    </location>
    <ligand>
        <name>FMN</name>
        <dbReference type="ChEBI" id="CHEBI:58210"/>
    </ligand>
</feature>